<keyword id="KW-0027">Amidation</keyword>
<keyword id="KW-0903">Direct protein sequencing</keyword>
<keyword id="KW-0527">Neuropeptide</keyword>
<keyword id="KW-0964">Secreted</keyword>
<comment type="subcellular location">
    <subcellularLocation>
        <location evidence="1 3">Secreted</location>
    </subcellularLocation>
</comment>
<comment type="tissue specificity">
    <text evidence="1">Expressed in the antennal lobe (at protein level).</text>
</comment>
<evidence type="ECO:0000269" key="1">
    <source>
    </source>
</evidence>
<evidence type="ECO:0000303" key="2">
    <source>
    </source>
</evidence>
<evidence type="ECO:0000305" key="3"/>
<name>TRP1_ONCFA</name>
<sequence>GPSGFLGMR</sequence>
<protein>
    <recommendedName>
        <fullName evidence="2">Tachykinin-related peptide 1</fullName>
        <shortName evidence="2">TKRP-1</shortName>
    </recommendedName>
</protein>
<organism>
    <name type="scientific">Oncopeltus fasciatus</name>
    <name type="common">Large milkweed bug</name>
    <dbReference type="NCBI Taxonomy" id="7536"/>
    <lineage>
        <taxon>Eukaryota</taxon>
        <taxon>Metazoa</taxon>
        <taxon>Ecdysozoa</taxon>
        <taxon>Arthropoda</taxon>
        <taxon>Hexapoda</taxon>
        <taxon>Insecta</taxon>
        <taxon>Pterygota</taxon>
        <taxon>Neoptera</taxon>
        <taxon>Paraneoptera</taxon>
        <taxon>Hemiptera</taxon>
        <taxon>Heteroptera</taxon>
        <taxon>Panheteroptera</taxon>
        <taxon>Pentatomomorpha</taxon>
        <taxon>Lygaeoidea</taxon>
        <taxon>Lygaeidae</taxon>
        <taxon>Lygaeinae</taxon>
        <taxon>Oncopeltus</taxon>
    </lineage>
</organism>
<accession>P86582</accession>
<feature type="peptide" id="PRO_0000395650" description="Tachykinin-related peptide 1" evidence="1">
    <location>
        <begin position="1"/>
        <end position="9"/>
    </location>
</feature>
<feature type="modified residue" description="Arginine amide" evidence="1">
    <location>
        <position position="9"/>
    </location>
</feature>
<dbReference type="GO" id="GO:0005576">
    <property type="term" value="C:extracellular region"/>
    <property type="evidence" value="ECO:0007005"/>
    <property type="project" value="UniProtKB"/>
</dbReference>
<dbReference type="GO" id="GO:0007218">
    <property type="term" value="P:neuropeptide signaling pathway"/>
    <property type="evidence" value="ECO:0007669"/>
    <property type="project" value="UniProtKB-KW"/>
</dbReference>
<proteinExistence type="evidence at protein level"/>
<reference evidence="3" key="1">
    <citation type="journal article" date="2009" name="Peptides">
        <title>Neuropeptides in Heteroptera: identification of allatotropin-related peptide and tachykinin-related peptides using MALDI-TOF mass spectrometry.</title>
        <authorList>
            <person name="Neupert S."/>
            <person name="Russell W.K."/>
            <person name="Russell D.H."/>
            <person name="Lopez J.D. Jr."/>
            <person name="Predel R."/>
            <person name="Nachman R.J."/>
        </authorList>
    </citation>
    <scope>PROTEIN SEQUENCE</scope>
    <scope>SUBCELLULAR LOCATION</scope>
    <scope>TISSUE SPECIFICITY</scope>
    <scope>AMIDATION AT ARG-9</scope>
    <source>
        <tissue evidence="1">Antennal lobe</tissue>
    </source>
</reference>